<comment type="function">
    <text evidence="1 2 6 7 8 9 10 11 12 13 14">Mediates the transport of prostaglandins (PGs, mainly PGE2, PGE1, PGE3, PGF2alpha, PGD2, PGH2) and thromboxanes (thromboxane B2) across the cell membrane (PubMed:10484490, PubMed:11880322, PubMed:11997327, PubMed:15044627, PubMed:15855165, PubMed:20346915, PubMed:7754369). PGs and thromboxanes play fundamental roles in diverse functions such as intraocular pressure, gastric acid secretion, renal salt and water transport, vascular tone, and fever (PubMed:15044627). Plays a role in the clearance of PGs from the circulation through cellular uptake, which allows cytoplasmic oxidation and PG signal termination (PubMed:11997327, PubMed:15044627, PubMed:7754369). PG uptake is dependent upon membrane potential and involves exchange of a monovalent anionic substrate (PGs exist physiologically as an anionic monovalent form) with a stoichiometry of 1:1 for divalent anions or of 1:2 for monovalent anions (By similarity). Uses lactate, generated by glycolysis, as a counter-substrate to mediate PG influx and efflux (PubMed:11997327). Under nonglycolytic conditions, metabolites other than lactate might serve as counter-substrates (PubMed:11997327). Although the mechanism is not clear, this transporter can function in bidirectional mode (By similarity). When apically expressed in epithelial cells, it facilitates transcellular transport (also called vectorial release), extracting PG from the apical medium and facilitating transport across the cell toward the basolateral side, whereupon the PG exits the cell by simple diffusion (PubMed:11880322, PubMed:15044627, PubMed:15855165). In the renal collecting duct, regulates renal Na+ balance by removing PGE2 from apical medium (PGE2 EP4 receptor is likely localized to the luminal/apical membrane and stimulates Na+ resorption) and transporting it toward the basolateral membrane (where PGE2 EP1 and EP3 receptors inhibit Na+ resorption) (PubMed:15855165). Plays a role in endometrium during decidualization, increasing uptake of PGs by decidual cells (By similarity). Involved in critical events for ovulation (By similarity). Regulates extracellular PGE2 concentration for follicular development in the ovaries (By similarity). Expressed intracellularly, may contribute to vesicular uptake of newly synthesized intracellular PGs, thereby facilitating exocytotic secretion of PGs without being metabolized (By similarity). Essential core component of the major type of large-conductance anion channel, Maxi-Cl, which plays essential roles in inorganic anion transport, cell volume regulation and release of ATP and glutamate not only in physiological processes but also in pathological processes (By similarity). May contribute to regulate the transport of organic compounds in testis across the blood-testis-barrier (By similarity).</text>
</comment>
<comment type="catalytic activity">
    <reaction evidence="2">
        <text>prostaglandin E2(out) = prostaglandin E2(in)</text>
        <dbReference type="Rhea" id="RHEA:50984"/>
        <dbReference type="ChEBI" id="CHEBI:606564"/>
    </reaction>
</comment>
<comment type="catalytic activity">
    <reaction evidence="11">
        <text>prostaglandin H2(out) + 2 (S)-lactate(in) = prostaglandin H2(in) + 2 (S)-lactate(out)</text>
        <dbReference type="Rhea" id="RHEA:74379"/>
        <dbReference type="ChEBI" id="CHEBI:16651"/>
        <dbReference type="ChEBI" id="CHEBI:57405"/>
    </reaction>
</comment>
<comment type="catalytic activity">
    <reaction evidence="6 7 8 9 20">
        <text>prostaglandin E2(out) + 2 (S)-lactate(in) = prostaglandin E2(in) + 2 (S)-lactate(out)</text>
        <dbReference type="Rhea" id="RHEA:74383"/>
        <dbReference type="ChEBI" id="CHEBI:16651"/>
        <dbReference type="ChEBI" id="CHEBI:606564"/>
    </reaction>
</comment>
<comment type="catalytic activity">
    <reaction evidence="1">
        <text>prostaglandin E1(out) + 2 (S)-lactate(in) = prostaglandin E1(in) + 2 (S)-lactate(out)</text>
        <dbReference type="Rhea" id="RHEA:74395"/>
        <dbReference type="ChEBI" id="CHEBI:16651"/>
        <dbReference type="ChEBI" id="CHEBI:57397"/>
    </reaction>
</comment>
<comment type="catalytic activity">
    <reaction evidence="1">
        <text>prostaglandin F2alpha(out) + 2 (S)-lactate(in) = prostaglandin F2alpha(in) + 2 (S)-lactate(out)</text>
        <dbReference type="Rhea" id="RHEA:74399"/>
        <dbReference type="ChEBI" id="CHEBI:16651"/>
        <dbReference type="ChEBI" id="CHEBI:57404"/>
    </reaction>
</comment>
<comment type="catalytic activity">
    <reaction evidence="1">
        <text>prostaglandin D2(out) + 2 (S)-lactate(in) = prostaglandin D2(in) + 2 (S)-lactate(out)</text>
        <dbReference type="Rhea" id="RHEA:74403"/>
        <dbReference type="ChEBI" id="CHEBI:16651"/>
        <dbReference type="ChEBI" id="CHEBI:57406"/>
    </reaction>
</comment>
<comment type="catalytic activity">
    <reaction evidence="1">
        <text>thromboxane B2(out) + 2 (S)-lactate(in) = thromboxane B2(in) + 2 (S)-lactate(out)</text>
        <dbReference type="Rhea" id="RHEA:74407"/>
        <dbReference type="ChEBI" id="CHEBI:16651"/>
        <dbReference type="ChEBI" id="CHEBI:90696"/>
    </reaction>
</comment>
<comment type="catalytic activity">
    <reaction evidence="1">
        <text>prostaglandin E3(out) + 2 (S)-lactate(in) = prostaglandin E3(in) + 2 (S)-lactate(out)</text>
        <dbReference type="Rhea" id="RHEA:74351"/>
        <dbReference type="ChEBI" id="CHEBI:16651"/>
        <dbReference type="ChEBI" id="CHEBI:133132"/>
    </reaction>
</comment>
<comment type="biophysicochemical properties">
    <kinetics>
        <KM evidence="11">91 nM for PGE2</KM>
        <KM evidence="11">376 nM for PGH2</KM>
        <Vmax evidence="11">0.284 nmol/h/mg protein with PGE2</Vmax>
        <Vmax evidence="11">0.757 nmol/h/mg protein with PGH2</Vmax>
    </kinetics>
</comment>
<comment type="subcellular location">
    <subcellularLocation>
        <location evidence="8 10 20">Cell membrane</location>
        <topology evidence="3">Multi-pass membrane protein</topology>
    </subcellularLocation>
    <subcellularLocation>
        <location evidence="1">Basal cell membrane</location>
        <topology evidence="3">Multi-pass membrane protein</topology>
    </subcellularLocation>
    <subcellularLocation>
        <location evidence="8">Cytoplasm</location>
    </subcellularLocation>
    <subcellularLocation>
        <location evidence="2">Lysosome</location>
    </subcellularLocation>
    <text evidence="8">In kidney cells, it localizes in cytoplasmic domains.</text>
</comment>
<comment type="tissue specificity">
    <text evidence="8">Expressed in kidney and platelets.</text>
</comment>
<comment type="similarity">
    <text evidence="18">Belongs to the organo anion transporter (TC 2.A.60) family.</text>
</comment>
<comment type="caution">
    <text evidence="19">Was originally thought to be a nuclear DNA-binding protein.</text>
</comment>
<comment type="sequence caution" evidence="18">
    <conflict type="erroneous initiation">
        <sequence resource="EMBL-CDS" id="AAA41574"/>
    </conflict>
    <text>Truncated N-terminus.</text>
</comment>
<comment type="sequence caution" evidence="18">
    <conflict type="frameshift">
        <sequence resource="EMBL-CDS" id="AAA41574"/>
    </conflict>
</comment>
<organism>
    <name type="scientific">Rattus norvegicus</name>
    <name type="common">Rat</name>
    <dbReference type="NCBI Taxonomy" id="10116"/>
    <lineage>
        <taxon>Eukaryota</taxon>
        <taxon>Metazoa</taxon>
        <taxon>Chordata</taxon>
        <taxon>Craniata</taxon>
        <taxon>Vertebrata</taxon>
        <taxon>Euteleostomi</taxon>
        <taxon>Mammalia</taxon>
        <taxon>Eutheria</taxon>
        <taxon>Euarchontoglires</taxon>
        <taxon>Glires</taxon>
        <taxon>Rodentia</taxon>
        <taxon>Myomorpha</taxon>
        <taxon>Muroidea</taxon>
        <taxon>Muridae</taxon>
        <taxon>Murinae</taxon>
        <taxon>Rattus</taxon>
    </lineage>
</organism>
<name>SO2A1_RAT</name>
<keyword id="KW-1003">Cell membrane</keyword>
<keyword id="KW-0963">Cytoplasm</keyword>
<keyword id="KW-1015">Disulfide bond</keyword>
<keyword id="KW-0325">Glycoprotein</keyword>
<keyword id="KW-0445">Lipid transport</keyword>
<keyword id="KW-0458">Lysosome</keyword>
<keyword id="KW-0472">Membrane</keyword>
<keyword id="KW-1185">Reference proteome</keyword>
<keyword id="KW-0812">Transmembrane</keyword>
<keyword id="KW-1133">Transmembrane helix</keyword>
<keyword id="KW-0813">Transport</keyword>
<accession>Q00910</accession>
<protein>
    <recommendedName>
        <fullName evidence="18">Solute carrier organic anion transporter family member 2A1</fullName>
        <shortName>SLCO2A1</shortName>
    </recommendedName>
    <alternativeName>
        <fullName evidence="17">Matrin F/G 1</fullName>
    </alternativeName>
    <alternativeName>
        <fullName>OATP2A1</fullName>
    </alternativeName>
    <alternativeName>
        <fullName>PHOAR2</fullName>
    </alternativeName>
    <alternativeName>
        <fullName evidence="14 17">Prostaglandin transporter</fullName>
        <shortName evidence="14 15 16 17">PGT</shortName>
    </alternativeName>
    <alternativeName>
        <fullName>Solute carrier family 21 member 2</fullName>
        <shortName>SLC21A2</shortName>
    </alternativeName>
</protein>
<feature type="chain" id="PRO_0000191060" description="Solute carrier organic anion transporter family member 2A1">
    <location>
        <begin position="1"/>
        <end position="644"/>
    </location>
</feature>
<feature type="transmembrane region" description="Helical" evidence="3">
    <location>
        <begin position="27"/>
        <end position="47"/>
    </location>
</feature>
<feature type="transmembrane region" description="Helical" evidence="3">
    <location>
        <begin position="71"/>
        <end position="91"/>
    </location>
</feature>
<feature type="transmembrane region" description="Helical" evidence="3">
    <location>
        <begin position="101"/>
        <end position="121"/>
    </location>
</feature>
<feature type="transmembrane region" description="Helical" evidence="3">
    <location>
        <begin position="172"/>
        <end position="192"/>
    </location>
</feature>
<feature type="transmembrane region" description="Helical" evidence="3">
    <location>
        <begin position="210"/>
        <end position="230"/>
    </location>
</feature>
<feature type="transmembrane region" description="Helical" evidence="3">
    <location>
        <begin position="258"/>
        <end position="278"/>
    </location>
</feature>
<feature type="transmembrane region" description="Helical" evidence="3">
    <location>
        <begin position="321"/>
        <end position="341"/>
    </location>
</feature>
<feature type="transmembrane region" description="Helical" evidence="3">
    <location>
        <begin position="365"/>
        <end position="385"/>
    </location>
</feature>
<feature type="transmembrane region" description="Helical" evidence="3">
    <location>
        <begin position="399"/>
        <end position="419"/>
    </location>
</feature>
<feature type="transmembrane region" description="Helical" evidence="3">
    <location>
        <begin position="511"/>
        <end position="531"/>
    </location>
</feature>
<feature type="transmembrane region" description="Helical" evidence="3">
    <location>
        <begin position="551"/>
        <end position="571"/>
    </location>
</feature>
<feature type="transmembrane region" description="Helical" evidence="3">
    <location>
        <begin position="606"/>
        <end position="626"/>
    </location>
</feature>
<feature type="domain" description="Kazal-like" evidence="4">
    <location>
        <begin position="438"/>
        <end position="496"/>
    </location>
</feature>
<feature type="region of interest" description="Disordered" evidence="5">
    <location>
        <begin position="1"/>
        <end position="20"/>
    </location>
</feature>
<feature type="glycosylation site" description="N-linked (GlcNAc...) asparagine" evidence="3">
    <location>
        <position position="134"/>
    </location>
</feature>
<feature type="glycosylation site" description="N-linked (GlcNAc...) asparagine" evidence="3">
    <location>
        <position position="478"/>
    </location>
</feature>
<feature type="glycosylation site" description="N-linked (GlcNAc...) asparagine" evidence="3">
    <location>
        <position position="491"/>
    </location>
</feature>
<feature type="glycosylation site" description="N-linked (GlcNAc...) asparagine" evidence="3">
    <location>
        <position position="639"/>
    </location>
</feature>
<feature type="disulfide bond" evidence="4">
    <location>
        <begin position="444"/>
        <end position="474"/>
    </location>
</feature>
<feature type="disulfide bond" evidence="4">
    <location>
        <begin position="450"/>
        <end position="470"/>
    </location>
</feature>
<feature type="disulfide bond" evidence="4">
    <location>
        <begin position="459"/>
        <end position="494"/>
    </location>
</feature>
<reference key="1">
    <citation type="journal article" date="1991" name="Proc. Natl. Acad. Sci. U.S.A.">
        <title>Molecular cloning of matrin F/G: a DNA binding protein of the nuclear matrix that contains putative zinc finger motifs.</title>
        <authorList>
            <person name="Hakes D.J."/>
            <person name="Berezney R."/>
        </authorList>
    </citation>
    <scope>NUCLEOTIDE SEQUENCE [MRNA]</scope>
    <source>
        <tissue>Liver</tissue>
    </source>
</reference>
<reference key="2">
    <citation type="journal article" date="1995" name="Science">
        <title>Identification and characterization of a prostaglandin transporter.</title>
        <authorList>
            <person name="Kanai N."/>
            <person name="Lu R."/>
            <person name="Satriano J.A."/>
            <person name="Bao Y."/>
            <person name="Wolkoff A.W."/>
            <person name="Schuster V.L."/>
        </authorList>
    </citation>
    <scope>CHARACTERIZATION</scope>
    <scope>FUNCTION</scope>
    <scope>TRANSPORTER ACTIVITY</scope>
</reference>
<reference key="3">
    <citation type="journal article" date="1999" name="Am. J. Physiol.">
        <title>Cloning of mouse prostaglandin transporter PGT cDNA: species-specific substrate affinities.</title>
        <authorList>
            <person name="Pucci M.L."/>
            <person name="Bao Y."/>
            <person name="Chan B."/>
            <person name="Itoh S."/>
            <person name="Lu R."/>
            <person name="Copeland N.G."/>
            <person name="Gilbert D.J."/>
            <person name="Jenkins N.A."/>
            <person name="Schuster V.L."/>
        </authorList>
    </citation>
    <scope>FUNCTION</scope>
    <scope>TRANSPORTER ACTIVITY</scope>
    <source>
        <tissue>Lung</tissue>
    </source>
</reference>
<reference key="4">
    <citation type="journal article" date="2002" name="Am. J. Physiol.">
        <title>Expression of PGT in MDCK cell monolayers: polarized apical localization and induction of active PG transport.</title>
        <authorList>
            <person name="Endo S."/>
            <person name="Nomura T."/>
            <person name="Chan B.S."/>
            <person name="Lu R."/>
            <person name="Pucci M.L."/>
            <person name="Bao Y."/>
            <person name="Schuster V.L."/>
        </authorList>
    </citation>
    <scope>FUNCTION</scope>
    <scope>TRANSPORTER ACTIVITY</scope>
</reference>
<reference key="5">
    <citation type="journal article" date="2002" name="Am. J. Physiol.">
        <title>Prostaglandin transporter PGT is expressed in cell types that synthesize and release prostanoids.</title>
        <authorList>
            <person name="Bao Y."/>
            <person name="Pucci M.L."/>
            <person name="Chan B.S."/>
            <person name="Lu R."/>
            <person name="Ito S."/>
            <person name="Schuster V.L."/>
        </authorList>
    </citation>
    <scope>FUNCTION</scope>
    <scope>TRANSPORTER ACTIVITY</scope>
    <scope>TISSUE SPECIFICITY</scope>
    <scope>SUBCELLULAR LOCATION</scope>
</reference>
<reference key="6">
    <citation type="journal article" date="2004" name="Mol. Pharmacol.">
        <title>The two-step model of prostaglandin signal termination: in vitro reconstitution with the prostaglandin transporter and prostaglandin 15 dehydrogenase.</title>
        <authorList>
            <person name="Nomura T."/>
            <person name="Lu R."/>
            <person name="Pucci M.L."/>
            <person name="Schuster V.L."/>
        </authorList>
    </citation>
    <scope>FUNCTION</scope>
    <scope>TRANSPORTER ACTIVITY</scope>
</reference>
<reference key="7">
    <citation type="journal article" date="2005" name="J. Biol. Chem.">
        <title>Prostaglandin signaling in the renal collecting duct: release, reuptake, and oxidation in the same cell.</title>
        <authorList>
            <person name="Nomura T."/>
            <person name="Chang H.Y."/>
            <person name="Lu R."/>
            <person name="Hankin J."/>
            <person name="Murphy R.C."/>
            <person name="Schuster V.L."/>
        </authorList>
    </citation>
    <scope>FUNCTION</scope>
    <scope>TRANSPORTER ACTIVITY</scope>
    <scope>SUBCELLULAR LOCATION</scope>
</reference>
<reference key="8">
    <citation type="journal article" date="2010" name="Biochem. Biophys. Res. Commun.">
        <title>The prostaglandin transporter PGT transports PGH(2).</title>
        <authorList>
            <person name="Chi Y."/>
            <person name="Schuster V.L."/>
        </authorList>
    </citation>
    <scope>FUNCTION</scope>
    <scope>TRANSPORTER ACTIVITY</scope>
    <scope>BIOPHYSICOCHEMICAL PROPERTIES</scope>
</reference>
<sequence length="644" mass="70387">MGLLLKPGARQGSGTSSVPDRRCPRSVFSNIKVFVLCHGLLQLCQLLYSAYFKSSLTTIEKRFGLSSSSSGLISSLNEISNATLIIFISYFGSRVNRPRMIGIGGLLLAAGAFVLTLPHFLSEPYQYTSTTDGNRSSFQTDLCQKHFGALPPSKCHSTVPDTHKETSSLWGLMVVAQLLAGIGTVPIQPFGISYVDDFAEPTNSPLYISILFAIAVFGPAFGYLLGSVMLRIFVDYGRVDTATVNLSPGDPRWIGAWWLGLLISSGFLIVTSLPFFFFPRAMSRGAERSVTAEETMQTEEDKSRGSLMDFIKRFPRIFLRLLMNPLFMLVVLSQCTFSSVIAGLSTFLNKFLEKQYGATAAYANFLIGAVNLPAAALGMLFGGILMKRFVFPLQTIPRVAATIITISMILCVPLFFMGCSTSAVAEVYPPSTSSSIHPQQPPACRRDCSCPDSFFHPVCGDNGVEYVSPCHAGCSSTNTSSEASKEPIYLNCSCVSGGSASAKTGSCPTSCAQLLLPSIFLISFAALIACISHNPLYMMVLRVVNQDEKSFAIGVQFLLMRLLAWLPAPSLYGLLIDSSCVRWNYLCSGRRGACAYYDNDALRNRYLGLQMVYKALGTLLLFFISWRMKKNREYSLQENTSGLI</sequence>
<proteinExistence type="evidence at protein level"/>
<gene>
    <name evidence="21" type="primary">Slco2a1</name>
    <name type="synonym">Matr1</name>
    <name type="synonym">Slc21a2</name>
</gene>
<evidence type="ECO:0000250" key="1">
    <source>
        <dbReference type="UniProtKB" id="Q92959"/>
    </source>
</evidence>
<evidence type="ECO:0000250" key="2">
    <source>
        <dbReference type="UniProtKB" id="Q9EPT5"/>
    </source>
</evidence>
<evidence type="ECO:0000255" key="3"/>
<evidence type="ECO:0000255" key="4">
    <source>
        <dbReference type="PROSITE-ProRule" id="PRU00798"/>
    </source>
</evidence>
<evidence type="ECO:0000256" key="5">
    <source>
        <dbReference type="SAM" id="MobiDB-lite"/>
    </source>
</evidence>
<evidence type="ECO:0000269" key="6">
    <source>
    </source>
</evidence>
<evidence type="ECO:0000269" key="7">
    <source>
    </source>
</evidence>
<evidence type="ECO:0000269" key="8">
    <source>
    </source>
</evidence>
<evidence type="ECO:0000269" key="9">
    <source>
    </source>
</evidence>
<evidence type="ECO:0000269" key="10">
    <source>
    </source>
</evidence>
<evidence type="ECO:0000269" key="11">
    <source>
    </source>
</evidence>
<evidence type="ECO:0000269" key="12">
    <source>
    </source>
</evidence>
<evidence type="ECO:0000303" key="13">
    <source>
    </source>
</evidence>
<evidence type="ECO:0000303" key="14">
    <source>
    </source>
</evidence>
<evidence type="ECO:0000303" key="15">
    <source>
    </source>
</evidence>
<evidence type="ECO:0000303" key="16">
    <source>
    </source>
</evidence>
<evidence type="ECO:0000303" key="17">
    <source>
    </source>
</evidence>
<evidence type="ECO:0000305" key="18"/>
<evidence type="ECO:0000305" key="19">
    <source>
    </source>
</evidence>
<evidence type="ECO:0000305" key="20">
    <source>
    </source>
</evidence>
<evidence type="ECO:0000312" key="21">
    <source>
        <dbReference type="RGD" id="3051"/>
    </source>
</evidence>
<dbReference type="EMBL" id="M64862">
    <property type="protein sequence ID" value="AAA41574.1"/>
    <property type="status" value="ALT_SEQ"/>
    <property type="molecule type" value="mRNA"/>
</dbReference>
<dbReference type="PIR" id="A41120">
    <property type="entry name" value="A41120"/>
</dbReference>
<dbReference type="SMR" id="Q00910"/>
<dbReference type="FunCoup" id="Q00910">
    <property type="interactions" value="241"/>
</dbReference>
<dbReference type="STRING" id="10116.ENSRNOP00000069382"/>
<dbReference type="BindingDB" id="Q00910"/>
<dbReference type="ChEMBL" id="CHEMBL2073680"/>
<dbReference type="GuidetoPHARMACOLOGY" id="1223"/>
<dbReference type="SwissLipids" id="SLP:000001648"/>
<dbReference type="TCDB" id="2.A.60.1.2">
    <property type="family name" value="the organo anion transporter (oat) family"/>
</dbReference>
<dbReference type="GlyCosmos" id="Q00910">
    <property type="glycosylation" value="4 sites, No reported glycans"/>
</dbReference>
<dbReference type="GlyGen" id="Q00910">
    <property type="glycosylation" value="4 sites"/>
</dbReference>
<dbReference type="PhosphoSitePlus" id="Q00910"/>
<dbReference type="PaxDb" id="10116-ENSRNOP00000012162"/>
<dbReference type="PeptideAtlas" id="Q00910"/>
<dbReference type="AGR" id="RGD:3051"/>
<dbReference type="RGD" id="3051">
    <property type="gene designation" value="Slco2a1"/>
</dbReference>
<dbReference type="eggNOG" id="KOG3626">
    <property type="taxonomic scope" value="Eukaryota"/>
</dbReference>
<dbReference type="InParanoid" id="Q00910"/>
<dbReference type="Reactome" id="R-RNO-879518">
    <property type="pathway name" value="Transport of organic anions"/>
</dbReference>
<dbReference type="PRO" id="PR:Q00910"/>
<dbReference type="Proteomes" id="UP000002494">
    <property type="component" value="Unplaced"/>
</dbReference>
<dbReference type="GO" id="GO:0009925">
    <property type="term" value="C:basal plasma membrane"/>
    <property type="evidence" value="ECO:0000250"/>
    <property type="project" value="UniProtKB"/>
</dbReference>
<dbReference type="GO" id="GO:0016323">
    <property type="term" value="C:basolateral plasma membrane"/>
    <property type="evidence" value="ECO:0000318"/>
    <property type="project" value="GO_Central"/>
</dbReference>
<dbReference type="GO" id="GO:0005764">
    <property type="term" value="C:lysosome"/>
    <property type="evidence" value="ECO:0007669"/>
    <property type="project" value="UniProtKB-SubCell"/>
</dbReference>
<dbReference type="GO" id="GO:0015132">
    <property type="term" value="F:prostaglandin transmembrane transporter activity"/>
    <property type="evidence" value="ECO:0000266"/>
    <property type="project" value="RGD"/>
</dbReference>
<dbReference type="GO" id="GO:0015347">
    <property type="term" value="F:sodium-independent organic anion transmembrane transporter activity"/>
    <property type="evidence" value="ECO:0000318"/>
    <property type="project" value="GO_Central"/>
</dbReference>
<dbReference type="GO" id="GO:0015732">
    <property type="term" value="P:prostaglandin transport"/>
    <property type="evidence" value="ECO:0000266"/>
    <property type="project" value="RGD"/>
</dbReference>
<dbReference type="GO" id="GO:0043252">
    <property type="term" value="P:sodium-independent organic anion transport"/>
    <property type="evidence" value="ECO:0000318"/>
    <property type="project" value="GO_Central"/>
</dbReference>
<dbReference type="CDD" id="cd17461">
    <property type="entry name" value="MFS_SLCO2A_OATP2A"/>
    <property type="match status" value="1"/>
</dbReference>
<dbReference type="FunFam" id="3.30.60.30:FF:000038">
    <property type="entry name" value="Solute carrier organic anion transporter family member"/>
    <property type="match status" value="1"/>
</dbReference>
<dbReference type="Gene3D" id="3.30.60.30">
    <property type="match status" value="1"/>
</dbReference>
<dbReference type="Gene3D" id="1.20.1250.20">
    <property type="entry name" value="MFS general substrate transporter like domains"/>
    <property type="match status" value="1"/>
</dbReference>
<dbReference type="InterPro" id="IPR002350">
    <property type="entry name" value="Kazal_dom"/>
</dbReference>
<dbReference type="InterPro" id="IPR036058">
    <property type="entry name" value="Kazal_dom_sf"/>
</dbReference>
<dbReference type="InterPro" id="IPR020846">
    <property type="entry name" value="MFS_dom"/>
</dbReference>
<dbReference type="InterPro" id="IPR036259">
    <property type="entry name" value="MFS_trans_sf"/>
</dbReference>
<dbReference type="InterPro" id="IPR004156">
    <property type="entry name" value="OATP"/>
</dbReference>
<dbReference type="NCBIfam" id="TIGR00805">
    <property type="entry name" value="oat"/>
    <property type="match status" value="1"/>
</dbReference>
<dbReference type="PANTHER" id="PTHR11388">
    <property type="entry name" value="ORGANIC ANION TRANSPORTER"/>
    <property type="match status" value="1"/>
</dbReference>
<dbReference type="PANTHER" id="PTHR11388:SF14">
    <property type="entry name" value="SOLUTE CARRIER ORGANIC ANION TRANSPORTER FAMILY MEMBER 2A1"/>
    <property type="match status" value="1"/>
</dbReference>
<dbReference type="Pfam" id="PF07648">
    <property type="entry name" value="Kazal_2"/>
    <property type="match status" value="1"/>
</dbReference>
<dbReference type="Pfam" id="PF03137">
    <property type="entry name" value="OATP"/>
    <property type="match status" value="1"/>
</dbReference>
<dbReference type="SUPFAM" id="SSF100895">
    <property type="entry name" value="Kazal-type serine protease inhibitors"/>
    <property type="match status" value="1"/>
</dbReference>
<dbReference type="SUPFAM" id="SSF103473">
    <property type="entry name" value="MFS general substrate transporter"/>
    <property type="match status" value="1"/>
</dbReference>
<dbReference type="PROSITE" id="PS51465">
    <property type="entry name" value="KAZAL_2"/>
    <property type="match status" value="1"/>
</dbReference>
<dbReference type="PROSITE" id="PS50850">
    <property type="entry name" value="MFS"/>
    <property type="match status" value="1"/>
</dbReference>